<accession>Q5R5Y7</accession>
<reference key="1">
    <citation type="submission" date="2004-11" db="EMBL/GenBank/DDBJ databases">
        <authorList>
            <consortium name="The German cDNA consortium"/>
        </authorList>
    </citation>
    <scope>NUCLEOTIDE SEQUENCE [LARGE SCALE MRNA]</scope>
    <source>
        <tissue>Brain cortex</tissue>
    </source>
</reference>
<evidence type="ECO:0000250" key="1">
    <source>
        <dbReference type="UniProtKB" id="Q9C0F3"/>
    </source>
</evidence>
<evidence type="ECO:0000255" key="2">
    <source>
        <dbReference type="PROSITE-ProRule" id="PRU00042"/>
    </source>
</evidence>
<evidence type="ECO:0000255" key="3">
    <source>
        <dbReference type="PROSITE-ProRule" id="PRU00119"/>
    </source>
</evidence>
<evidence type="ECO:0000256" key="4">
    <source>
        <dbReference type="SAM" id="MobiDB-lite"/>
    </source>
</evidence>
<evidence type="ECO:0000305" key="5"/>
<proteinExistence type="evidence at transcript level"/>
<feature type="chain" id="PRO_0000047586" description="Zinc finger protein 436">
    <location>
        <begin position="1"/>
        <end position="470"/>
    </location>
</feature>
<feature type="domain" description="KRAB" evidence="3">
    <location>
        <begin position="14"/>
        <end position="86"/>
    </location>
</feature>
<feature type="zinc finger region" description="C2H2-type 1" evidence="2">
    <location>
        <begin position="138"/>
        <end position="160"/>
    </location>
</feature>
<feature type="zinc finger region" description="C2H2-type 2; degenerate" evidence="2">
    <location>
        <begin position="166"/>
        <end position="188"/>
    </location>
</feature>
<feature type="zinc finger region" description="C2H2-type 3" evidence="2">
    <location>
        <begin position="194"/>
        <end position="216"/>
    </location>
</feature>
<feature type="zinc finger region" description="C2H2-type 4" evidence="2">
    <location>
        <begin position="222"/>
        <end position="244"/>
    </location>
</feature>
<feature type="zinc finger region" description="C2H2-type 5" evidence="2">
    <location>
        <begin position="250"/>
        <end position="272"/>
    </location>
</feature>
<feature type="zinc finger region" description="C2H2-type 6" evidence="2">
    <location>
        <begin position="278"/>
        <end position="300"/>
    </location>
</feature>
<feature type="zinc finger region" description="C2H2-type 7" evidence="2">
    <location>
        <begin position="306"/>
        <end position="328"/>
    </location>
</feature>
<feature type="zinc finger region" description="C2H2-type 8" evidence="2">
    <location>
        <begin position="334"/>
        <end position="356"/>
    </location>
</feature>
<feature type="zinc finger region" description="C2H2-type 9" evidence="2">
    <location>
        <begin position="362"/>
        <end position="384"/>
    </location>
</feature>
<feature type="zinc finger region" description="C2H2-type 10" evidence="2">
    <location>
        <begin position="390"/>
        <end position="412"/>
    </location>
</feature>
<feature type="zinc finger region" description="C2H2-type 11" evidence="2">
    <location>
        <begin position="418"/>
        <end position="440"/>
    </location>
</feature>
<feature type="zinc finger region" description="C2H2-type 12" evidence="2">
    <location>
        <begin position="446"/>
        <end position="468"/>
    </location>
</feature>
<feature type="region of interest" description="Disordered" evidence="4">
    <location>
        <begin position="62"/>
        <end position="103"/>
    </location>
</feature>
<feature type="compositionally biased region" description="Acidic residues" evidence="4">
    <location>
        <begin position="85"/>
        <end position="97"/>
    </location>
</feature>
<feature type="cross-link" description="Glycyl lysine isopeptide (Lys-Gly) (interchain with G-Cter in SUMO2)" evidence="1">
    <location>
        <position position="66"/>
    </location>
</feature>
<keyword id="KW-0238">DNA-binding</keyword>
<keyword id="KW-1017">Isopeptide bond</keyword>
<keyword id="KW-0479">Metal-binding</keyword>
<keyword id="KW-0539">Nucleus</keyword>
<keyword id="KW-1185">Reference proteome</keyword>
<keyword id="KW-0677">Repeat</keyword>
<keyword id="KW-0804">Transcription</keyword>
<keyword id="KW-0805">Transcription regulation</keyword>
<keyword id="KW-0832">Ubl conjugation</keyword>
<keyword id="KW-0862">Zinc</keyword>
<keyword id="KW-0863">Zinc-finger</keyword>
<comment type="function">
    <text>May be involved in transcriptional regulation.</text>
</comment>
<comment type="subcellular location">
    <subcellularLocation>
        <location evidence="5">Nucleus</location>
    </subcellularLocation>
</comment>
<comment type="similarity">
    <text evidence="5">Belongs to the krueppel C2H2-type zinc-finger protein family.</text>
</comment>
<organism>
    <name type="scientific">Pongo abelii</name>
    <name type="common">Sumatran orangutan</name>
    <name type="synonym">Pongo pygmaeus abelii</name>
    <dbReference type="NCBI Taxonomy" id="9601"/>
    <lineage>
        <taxon>Eukaryota</taxon>
        <taxon>Metazoa</taxon>
        <taxon>Chordata</taxon>
        <taxon>Craniata</taxon>
        <taxon>Vertebrata</taxon>
        <taxon>Euteleostomi</taxon>
        <taxon>Mammalia</taxon>
        <taxon>Eutheria</taxon>
        <taxon>Euarchontoglires</taxon>
        <taxon>Primates</taxon>
        <taxon>Haplorrhini</taxon>
        <taxon>Catarrhini</taxon>
        <taxon>Hominidae</taxon>
        <taxon>Pongo</taxon>
    </lineage>
</organism>
<name>ZN436_PONAB</name>
<protein>
    <recommendedName>
        <fullName>Zinc finger protein 436</fullName>
    </recommendedName>
</protein>
<gene>
    <name type="primary">ZNF436</name>
</gene>
<dbReference type="EMBL" id="CR860714">
    <property type="protein sequence ID" value="CAH92829.1"/>
    <property type="molecule type" value="mRNA"/>
</dbReference>
<dbReference type="RefSeq" id="NP_001126653.1">
    <property type="nucleotide sequence ID" value="NM_001133181.1"/>
</dbReference>
<dbReference type="SMR" id="Q5R5Y7"/>
<dbReference type="STRING" id="9601.ENSPPYP00000002018"/>
<dbReference type="GeneID" id="100173652"/>
<dbReference type="KEGG" id="pon:100173652"/>
<dbReference type="CTD" id="80818"/>
<dbReference type="eggNOG" id="KOG1721">
    <property type="taxonomic scope" value="Eukaryota"/>
</dbReference>
<dbReference type="InParanoid" id="Q5R5Y7"/>
<dbReference type="OrthoDB" id="6591996at2759"/>
<dbReference type="Proteomes" id="UP000001595">
    <property type="component" value="Unplaced"/>
</dbReference>
<dbReference type="GO" id="GO:0005634">
    <property type="term" value="C:nucleus"/>
    <property type="evidence" value="ECO:0007669"/>
    <property type="project" value="UniProtKB-SubCell"/>
</dbReference>
<dbReference type="GO" id="GO:0000981">
    <property type="term" value="F:DNA-binding transcription factor activity, RNA polymerase II-specific"/>
    <property type="evidence" value="ECO:0007669"/>
    <property type="project" value="TreeGrafter"/>
</dbReference>
<dbReference type="GO" id="GO:0000978">
    <property type="term" value="F:RNA polymerase II cis-regulatory region sequence-specific DNA binding"/>
    <property type="evidence" value="ECO:0007669"/>
    <property type="project" value="TreeGrafter"/>
</dbReference>
<dbReference type="GO" id="GO:0008270">
    <property type="term" value="F:zinc ion binding"/>
    <property type="evidence" value="ECO:0007669"/>
    <property type="project" value="UniProtKB-KW"/>
</dbReference>
<dbReference type="CDD" id="cd07765">
    <property type="entry name" value="KRAB_A-box"/>
    <property type="match status" value="1"/>
</dbReference>
<dbReference type="FunFam" id="3.30.160.60:FF:000139">
    <property type="entry name" value="zinc finger protein 1 homolog"/>
    <property type="match status" value="2"/>
</dbReference>
<dbReference type="FunFam" id="3.30.160.60:FF:000135">
    <property type="entry name" value="Zinc finger protein 358"/>
    <property type="match status" value="1"/>
</dbReference>
<dbReference type="FunFam" id="3.30.160.60:FF:000016">
    <property type="entry name" value="zinc finger protein 37 homolog"/>
    <property type="match status" value="3"/>
</dbReference>
<dbReference type="FunFam" id="3.30.160.60:FF:000967">
    <property type="entry name" value="zinc finger protein 436 isoform X1"/>
    <property type="match status" value="1"/>
</dbReference>
<dbReference type="FunFam" id="3.30.160.60:FF:001219">
    <property type="entry name" value="zinc finger protein 436 isoform X2"/>
    <property type="match status" value="1"/>
</dbReference>
<dbReference type="FunFam" id="3.30.160.60:FF:002090">
    <property type="entry name" value="Zinc finger protein 473"/>
    <property type="match status" value="1"/>
</dbReference>
<dbReference type="FunFam" id="3.30.160.60:FF:002254">
    <property type="entry name" value="Zinc finger protein 540"/>
    <property type="match status" value="2"/>
</dbReference>
<dbReference type="FunFam" id="3.30.160.60:FF:001697">
    <property type="entry name" value="zinc finger protein 623"/>
    <property type="match status" value="1"/>
</dbReference>
<dbReference type="Gene3D" id="6.10.140.140">
    <property type="match status" value="1"/>
</dbReference>
<dbReference type="Gene3D" id="3.30.160.60">
    <property type="entry name" value="Classic Zinc Finger"/>
    <property type="match status" value="12"/>
</dbReference>
<dbReference type="InterPro" id="IPR001909">
    <property type="entry name" value="KRAB"/>
</dbReference>
<dbReference type="InterPro" id="IPR036051">
    <property type="entry name" value="KRAB_dom_sf"/>
</dbReference>
<dbReference type="InterPro" id="IPR036236">
    <property type="entry name" value="Znf_C2H2_sf"/>
</dbReference>
<dbReference type="InterPro" id="IPR013087">
    <property type="entry name" value="Znf_C2H2_type"/>
</dbReference>
<dbReference type="PANTHER" id="PTHR23235:SF178">
    <property type="entry name" value="C2H2-TYPE DOMAIN-CONTAINING PROTEIN-RELATED"/>
    <property type="match status" value="1"/>
</dbReference>
<dbReference type="PANTHER" id="PTHR23235">
    <property type="entry name" value="KRUEPPEL-LIKE TRANSCRIPTION FACTOR"/>
    <property type="match status" value="1"/>
</dbReference>
<dbReference type="Pfam" id="PF01352">
    <property type="entry name" value="KRAB"/>
    <property type="match status" value="1"/>
</dbReference>
<dbReference type="Pfam" id="PF00096">
    <property type="entry name" value="zf-C2H2"/>
    <property type="match status" value="12"/>
</dbReference>
<dbReference type="SMART" id="SM00349">
    <property type="entry name" value="KRAB"/>
    <property type="match status" value="1"/>
</dbReference>
<dbReference type="SMART" id="SM00355">
    <property type="entry name" value="ZnF_C2H2"/>
    <property type="match status" value="12"/>
</dbReference>
<dbReference type="SUPFAM" id="SSF57667">
    <property type="entry name" value="beta-beta-alpha zinc fingers"/>
    <property type="match status" value="6"/>
</dbReference>
<dbReference type="SUPFAM" id="SSF109640">
    <property type="entry name" value="KRAB domain (Kruppel-associated box)"/>
    <property type="match status" value="1"/>
</dbReference>
<dbReference type="PROSITE" id="PS50805">
    <property type="entry name" value="KRAB"/>
    <property type="match status" value="1"/>
</dbReference>
<dbReference type="PROSITE" id="PS00028">
    <property type="entry name" value="ZINC_FINGER_C2H2_1"/>
    <property type="match status" value="11"/>
</dbReference>
<dbReference type="PROSITE" id="PS50157">
    <property type="entry name" value="ZINC_FINGER_C2H2_2"/>
    <property type="match status" value="12"/>
</dbReference>
<sequence length="470" mass="54334">MAATLLMAGSQAPVTFEDMAMYLTREEWRPLDAAQRDLYRDVMQENYGNVVSLDFEIRSENEVNPKQEISEDVQFGTTSERPAENAEENPESEEGFESGDRSERQWGDLTAEEWVSYPLQQVTDLLVHKEVHTGIRYHICSHCGKAFSQISDLNRHQKTHTGDRPYKCYECGKGFSRSSHLIQHQRTYTGERPYDCNECGKSFGRSSHLIQHQTIHTGEKPHKCNECGKSFCRLSHLIQHQRTHSGEKPYECEECGKSFSRSSHLAQHQRTHTGEKPYECNECGRGFSERSDLIKHYRVHTGERPYKCDECGKNFSQNSDLVRHRRAHTGEKPYHCNECGENFSRISHLVQHQRTHTGEKPYECNACGKSFSRSSHLITHQKIHTGEKPYECNECWRSFGERSDLIKHQRTHTGEKPYECVQCGKGFTQSSNLITHQRVHTGEKPYECTECEKSFSRSSALIKHKRVHTD</sequence>